<dbReference type="EC" id="3.1.3.18" evidence="1"/>
<dbReference type="EMBL" id="BA000012">
    <property type="protein sequence ID" value="BAB48095.1"/>
    <property type="molecule type" value="Genomic_DNA"/>
</dbReference>
<dbReference type="RefSeq" id="WP_010909451.1">
    <property type="nucleotide sequence ID" value="NC_002678.2"/>
</dbReference>
<dbReference type="SMR" id="Q98ML8"/>
<dbReference type="KEGG" id="mlo:mlr0528"/>
<dbReference type="eggNOG" id="COG0546">
    <property type="taxonomic scope" value="Bacteria"/>
</dbReference>
<dbReference type="HOGENOM" id="CLU_045011_19_1_5"/>
<dbReference type="UniPathway" id="UPA00865">
    <property type="reaction ID" value="UER00834"/>
</dbReference>
<dbReference type="Proteomes" id="UP000000552">
    <property type="component" value="Chromosome"/>
</dbReference>
<dbReference type="GO" id="GO:0005829">
    <property type="term" value="C:cytosol"/>
    <property type="evidence" value="ECO:0007669"/>
    <property type="project" value="TreeGrafter"/>
</dbReference>
<dbReference type="GO" id="GO:0046872">
    <property type="term" value="F:metal ion binding"/>
    <property type="evidence" value="ECO:0007669"/>
    <property type="project" value="UniProtKB-KW"/>
</dbReference>
<dbReference type="GO" id="GO:0008967">
    <property type="term" value="F:phosphoglycolate phosphatase activity"/>
    <property type="evidence" value="ECO:0007669"/>
    <property type="project" value="UniProtKB-UniRule"/>
</dbReference>
<dbReference type="GO" id="GO:0005975">
    <property type="term" value="P:carbohydrate metabolic process"/>
    <property type="evidence" value="ECO:0007669"/>
    <property type="project" value="InterPro"/>
</dbReference>
<dbReference type="GO" id="GO:0006281">
    <property type="term" value="P:DNA repair"/>
    <property type="evidence" value="ECO:0007669"/>
    <property type="project" value="TreeGrafter"/>
</dbReference>
<dbReference type="GO" id="GO:0046295">
    <property type="term" value="P:glycolate biosynthetic process"/>
    <property type="evidence" value="ECO:0007669"/>
    <property type="project" value="UniProtKB-UniRule"/>
</dbReference>
<dbReference type="CDD" id="cd07512">
    <property type="entry name" value="HAD_PGPase"/>
    <property type="match status" value="1"/>
</dbReference>
<dbReference type="FunFam" id="3.40.50.1000:FF:000022">
    <property type="entry name" value="Phosphoglycolate phosphatase"/>
    <property type="match status" value="1"/>
</dbReference>
<dbReference type="Gene3D" id="3.40.50.1000">
    <property type="entry name" value="HAD superfamily/HAD-like"/>
    <property type="match status" value="1"/>
</dbReference>
<dbReference type="Gene3D" id="1.10.150.240">
    <property type="entry name" value="Putative phosphatase, domain 2"/>
    <property type="match status" value="1"/>
</dbReference>
<dbReference type="HAMAP" id="MF_00495">
    <property type="entry name" value="GPH_hydrolase_bact"/>
    <property type="match status" value="1"/>
</dbReference>
<dbReference type="InterPro" id="IPR050155">
    <property type="entry name" value="HAD-like_hydrolase_sf"/>
</dbReference>
<dbReference type="InterPro" id="IPR036412">
    <property type="entry name" value="HAD-like_sf"/>
</dbReference>
<dbReference type="InterPro" id="IPR006439">
    <property type="entry name" value="HAD-SF_hydro_IA"/>
</dbReference>
<dbReference type="InterPro" id="IPR041492">
    <property type="entry name" value="HAD_2"/>
</dbReference>
<dbReference type="InterPro" id="IPR023214">
    <property type="entry name" value="HAD_sf"/>
</dbReference>
<dbReference type="InterPro" id="IPR023198">
    <property type="entry name" value="PGP-like_dom2"/>
</dbReference>
<dbReference type="InterPro" id="IPR037512">
    <property type="entry name" value="PGPase_prok"/>
</dbReference>
<dbReference type="NCBIfam" id="TIGR01549">
    <property type="entry name" value="HAD-SF-IA-v1"/>
    <property type="match status" value="1"/>
</dbReference>
<dbReference type="NCBIfam" id="TIGR01509">
    <property type="entry name" value="HAD-SF-IA-v3"/>
    <property type="match status" value="1"/>
</dbReference>
<dbReference type="PANTHER" id="PTHR43434">
    <property type="entry name" value="PHOSPHOGLYCOLATE PHOSPHATASE"/>
    <property type="match status" value="1"/>
</dbReference>
<dbReference type="PANTHER" id="PTHR43434:SF1">
    <property type="entry name" value="PHOSPHOGLYCOLATE PHOSPHATASE"/>
    <property type="match status" value="1"/>
</dbReference>
<dbReference type="Pfam" id="PF13419">
    <property type="entry name" value="HAD_2"/>
    <property type="match status" value="1"/>
</dbReference>
<dbReference type="SFLD" id="SFLDG01135">
    <property type="entry name" value="C1.5.6:_HAD__Beta-PGM__Phospha"/>
    <property type="match status" value="1"/>
</dbReference>
<dbReference type="SFLD" id="SFLDS00003">
    <property type="entry name" value="Haloacid_Dehalogenase"/>
    <property type="match status" value="1"/>
</dbReference>
<dbReference type="SUPFAM" id="SSF56784">
    <property type="entry name" value="HAD-like"/>
    <property type="match status" value="1"/>
</dbReference>
<feature type="chain" id="PRO_0000108037" description="Phosphoglycolate phosphatase">
    <location>
        <begin position="1"/>
        <end position="227"/>
    </location>
</feature>
<feature type="active site" description="Nucleophile" evidence="1">
    <location>
        <position position="9"/>
    </location>
</feature>
<feature type="binding site" evidence="1">
    <location>
        <position position="9"/>
    </location>
    <ligand>
        <name>Mg(2+)</name>
        <dbReference type="ChEBI" id="CHEBI:18420"/>
    </ligand>
</feature>
<feature type="binding site" evidence="1">
    <location>
        <position position="11"/>
    </location>
    <ligand>
        <name>Mg(2+)</name>
        <dbReference type="ChEBI" id="CHEBI:18420"/>
    </ligand>
</feature>
<feature type="binding site" evidence="1">
    <location>
        <position position="171"/>
    </location>
    <ligand>
        <name>Mg(2+)</name>
        <dbReference type="ChEBI" id="CHEBI:18420"/>
    </ligand>
</feature>
<organism>
    <name type="scientific">Mesorhizobium japonicum (strain LMG 29417 / CECT 9101 / MAFF 303099)</name>
    <name type="common">Mesorhizobium loti (strain MAFF 303099)</name>
    <dbReference type="NCBI Taxonomy" id="266835"/>
    <lineage>
        <taxon>Bacteria</taxon>
        <taxon>Pseudomonadati</taxon>
        <taxon>Pseudomonadota</taxon>
        <taxon>Alphaproteobacteria</taxon>
        <taxon>Hyphomicrobiales</taxon>
        <taxon>Phyllobacteriaceae</taxon>
        <taxon>Mesorhizobium</taxon>
    </lineage>
</organism>
<sequence length="227" mass="24821">MSRPIIVFDLDGTLIDTAPDLLDSLNHSLAASELTAVDEAGFRRFVGHGGRVMIERAHAAQQRSLDVAEHDRLLKLFLDHYTDNIPGKSRPYPGVIEAIARFEKAGYLLAICTNKYEANSLALIEALGLTRHFAAIAGQDTFAFRKPDPRHLTETIRLAGGDAHRALMVGDSQTDIDTAKAAGIPVVAVDFGYTDRHVREFEPSAVISHFDALTVELAERLIRAAGH</sequence>
<accession>Q98ML8</accession>
<proteinExistence type="inferred from homology"/>
<name>GPH_RHILO</name>
<protein>
    <recommendedName>
        <fullName evidence="1">Phosphoglycolate phosphatase</fullName>
        <shortName evidence="1">PGP</shortName>
        <shortName evidence="1">PGPase</shortName>
        <ecNumber evidence="1">3.1.3.18</ecNumber>
    </recommendedName>
</protein>
<evidence type="ECO:0000255" key="1">
    <source>
        <dbReference type="HAMAP-Rule" id="MF_00495"/>
    </source>
</evidence>
<reference key="1">
    <citation type="journal article" date="2000" name="DNA Res.">
        <title>Complete genome structure of the nitrogen-fixing symbiotic bacterium Mesorhizobium loti.</title>
        <authorList>
            <person name="Kaneko T."/>
            <person name="Nakamura Y."/>
            <person name="Sato S."/>
            <person name="Asamizu E."/>
            <person name="Kato T."/>
            <person name="Sasamoto S."/>
            <person name="Watanabe A."/>
            <person name="Idesawa K."/>
            <person name="Ishikawa A."/>
            <person name="Kawashima K."/>
            <person name="Kimura T."/>
            <person name="Kishida Y."/>
            <person name="Kiyokawa C."/>
            <person name="Kohara M."/>
            <person name="Matsumoto M."/>
            <person name="Matsuno A."/>
            <person name="Mochizuki Y."/>
            <person name="Nakayama S."/>
            <person name="Nakazaki N."/>
            <person name="Shimpo S."/>
            <person name="Sugimoto M."/>
            <person name="Takeuchi C."/>
            <person name="Yamada M."/>
            <person name="Tabata S."/>
        </authorList>
    </citation>
    <scope>NUCLEOTIDE SEQUENCE [LARGE SCALE GENOMIC DNA]</scope>
    <source>
        <strain>LMG 29417 / CECT 9101 / MAFF 303099</strain>
    </source>
</reference>
<gene>
    <name evidence="1" type="primary">gph</name>
    <name type="ordered locus">mlr0528</name>
</gene>
<keyword id="KW-0119">Carbohydrate metabolism</keyword>
<keyword id="KW-0378">Hydrolase</keyword>
<keyword id="KW-0460">Magnesium</keyword>
<keyword id="KW-0479">Metal-binding</keyword>
<comment type="function">
    <text evidence="1">Specifically catalyzes the dephosphorylation of 2-phosphoglycolate. Is involved in the dissimilation of the intracellular 2-phosphoglycolate formed during the DNA repair of 3'-phosphoglycolate ends, a major class of DNA lesions induced by oxidative stress.</text>
</comment>
<comment type="catalytic activity">
    <reaction evidence="1">
        <text>2-phosphoglycolate + H2O = glycolate + phosphate</text>
        <dbReference type="Rhea" id="RHEA:14369"/>
        <dbReference type="ChEBI" id="CHEBI:15377"/>
        <dbReference type="ChEBI" id="CHEBI:29805"/>
        <dbReference type="ChEBI" id="CHEBI:43474"/>
        <dbReference type="ChEBI" id="CHEBI:58033"/>
        <dbReference type="EC" id="3.1.3.18"/>
    </reaction>
</comment>
<comment type="cofactor">
    <cofactor evidence="1">
        <name>Mg(2+)</name>
        <dbReference type="ChEBI" id="CHEBI:18420"/>
    </cofactor>
</comment>
<comment type="pathway">
    <text evidence="1">Organic acid metabolism; glycolate biosynthesis; glycolate from 2-phosphoglycolate: step 1/1.</text>
</comment>
<comment type="similarity">
    <text evidence="1">Belongs to the HAD-like hydrolase superfamily. CbbY/CbbZ/Gph/YieH family.</text>
</comment>